<accession>A5FVE7</accession>
<evidence type="ECO:0000255" key="1">
    <source>
        <dbReference type="HAMAP-Rule" id="MF_01603"/>
    </source>
</evidence>
<dbReference type="EC" id="2.7.1.167" evidence="1"/>
<dbReference type="EC" id="2.7.7.70" evidence="1"/>
<dbReference type="EMBL" id="CP000697">
    <property type="protein sequence ID" value="ABQ29579.1"/>
    <property type="molecule type" value="Genomic_DNA"/>
</dbReference>
<dbReference type="SMR" id="A5FVE7"/>
<dbReference type="STRING" id="349163.Acry_0354"/>
<dbReference type="KEGG" id="acr:Acry_0354"/>
<dbReference type="eggNOG" id="COG0615">
    <property type="taxonomic scope" value="Bacteria"/>
</dbReference>
<dbReference type="eggNOG" id="COG2870">
    <property type="taxonomic scope" value="Bacteria"/>
</dbReference>
<dbReference type="HOGENOM" id="CLU_021150_2_1_5"/>
<dbReference type="UniPathway" id="UPA00356">
    <property type="reaction ID" value="UER00437"/>
</dbReference>
<dbReference type="UniPathway" id="UPA00356">
    <property type="reaction ID" value="UER00439"/>
</dbReference>
<dbReference type="Proteomes" id="UP000000245">
    <property type="component" value="Chromosome"/>
</dbReference>
<dbReference type="GO" id="GO:0005829">
    <property type="term" value="C:cytosol"/>
    <property type="evidence" value="ECO:0007669"/>
    <property type="project" value="TreeGrafter"/>
</dbReference>
<dbReference type="GO" id="GO:0005524">
    <property type="term" value="F:ATP binding"/>
    <property type="evidence" value="ECO:0007669"/>
    <property type="project" value="UniProtKB-UniRule"/>
</dbReference>
<dbReference type="GO" id="GO:0033785">
    <property type="term" value="F:heptose 7-phosphate kinase activity"/>
    <property type="evidence" value="ECO:0007669"/>
    <property type="project" value="UniProtKB-UniRule"/>
</dbReference>
<dbReference type="GO" id="GO:0033786">
    <property type="term" value="F:heptose-1-phosphate adenylyltransferase activity"/>
    <property type="evidence" value="ECO:0007669"/>
    <property type="project" value="UniProtKB-UniRule"/>
</dbReference>
<dbReference type="GO" id="GO:0016773">
    <property type="term" value="F:phosphotransferase activity, alcohol group as acceptor"/>
    <property type="evidence" value="ECO:0007669"/>
    <property type="project" value="InterPro"/>
</dbReference>
<dbReference type="GO" id="GO:0097171">
    <property type="term" value="P:ADP-L-glycero-beta-D-manno-heptose biosynthetic process"/>
    <property type="evidence" value="ECO:0007669"/>
    <property type="project" value="UniProtKB-UniPathway"/>
</dbReference>
<dbReference type="CDD" id="cd01172">
    <property type="entry name" value="RfaE_like"/>
    <property type="match status" value="1"/>
</dbReference>
<dbReference type="Gene3D" id="3.40.1190.20">
    <property type="match status" value="1"/>
</dbReference>
<dbReference type="Gene3D" id="3.40.50.620">
    <property type="entry name" value="HUPs"/>
    <property type="match status" value="1"/>
</dbReference>
<dbReference type="HAMAP" id="MF_01603">
    <property type="entry name" value="HldE"/>
    <property type="match status" value="1"/>
</dbReference>
<dbReference type="InterPro" id="IPR023030">
    <property type="entry name" value="Bifunc_HldE"/>
</dbReference>
<dbReference type="InterPro" id="IPR004821">
    <property type="entry name" value="Cyt_trans-like"/>
</dbReference>
<dbReference type="InterPro" id="IPR011611">
    <property type="entry name" value="PfkB_dom"/>
</dbReference>
<dbReference type="InterPro" id="IPR011913">
    <property type="entry name" value="RfaE_dom_I"/>
</dbReference>
<dbReference type="InterPro" id="IPR011914">
    <property type="entry name" value="RfaE_dom_II"/>
</dbReference>
<dbReference type="InterPro" id="IPR029056">
    <property type="entry name" value="Ribokinase-like"/>
</dbReference>
<dbReference type="InterPro" id="IPR014729">
    <property type="entry name" value="Rossmann-like_a/b/a_fold"/>
</dbReference>
<dbReference type="NCBIfam" id="TIGR00125">
    <property type="entry name" value="cyt_tran_rel"/>
    <property type="match status" value="1"/>
</dbReference>
<dbReference type="NCBIfam" id="TIGR02198">
    <property type="entry name" value="rfaE_dom_I"/>
    <property type="match status" value="1"/>
</dbReference>
<dbReference type="NCBIfam" id="TIGR02199">
    <property type="entry name" value="rfaE_dom_II"/>
    <property type="match status" value="1"/>
</dbReference>
<dbReference type="PANTHER" id="PTHR46969">
    <property type="entry name" value="BIFUNCTIONAL PROTEIN HLDE"/>
    <property type="match status" value="1"/>
</dbReference>
<dbReference type="PANTHER" id="PTHR46969:SF1">
    <property type="entry name" value="BIFUNCTIONAL PROTEIN HLDE"/>
    <property type="match status" value="1"/>
</dbReference>
<dbReference type="Pfam" id="PF01467">
    <property type="entry name" value="CTP_transf_like"/>
    <property type="match status" value="1"/>
</dbReference>
<dbReference type="Pfam" id="PF00294">
    <property type="entry name" value="PfkB"/>
    <property type="match status" value="1"/>
</dbReference>
<dbReference type="SUPFAM" id="SSF52374">
    <property type="entry name" value="Nucleotidylyl transferase"/>
    <property type="match status" value="1"/>
</dbReference>
<dbReference type="SUPFAM" id="SSF53613">
    <property type="entry name" value="Ribokinase-like"/>
    <property type="match status" value="1"/>
</dbReference>
<proteinExistence type="inferred from homology"/>
<reference key="1">
    <citation type="submission" date="2007-05" db="EMBL/GenBank/DDBJ databases">
        <title>Complete sequence of chromosome of Acidiphilium cryptum JF-5.</title>
        <authorList>
            <consortium name="US DOE Joint Genome Institute"/>
            <person name="Copeland A."/>
            <person name="Lucas S."/>
            <person name="Lapidus A."/>
            <person name="Barry K."/>
            <person name="Detter J.C."/>
            <person name="Glavina del Rio T."/>
            <person name="Hammon N."/>
            <person name="Israni S."/>
            <person name="Dalin E."/>
            <person name="Tice H."/>
            <person name="Pitluck S."/>
            <person name="Sims D."/>
            <person name="Brettin T."/>
            <person name="Bruce D."/>
            <person name="Han C."/>
            <person name="Schmutz J."/>
            <person name="Larimer F."/>
            <person name="Land M."/>
            <person name="Hauser L."/>
            <person name="Kyrpides N."/>
            <person name="Kim E."/>
            <person name="Magnuson T."/>
            <person name="Richardson P."/>
        </authorList>
    </citation>
    <scope>NUCLEOTIDE SEQUENCE [LARGE SCALE GENOMIC DNA]</scope>
    <source>
        <strain>JF-5</strain>
    </source>
</reference>
<comment type="function">
    <text evidence="1">Catalyzes the phosphorylation of D-glycero-D-manno-heptose 7-phosphate at the C-1 position to selectively form D-glycero-beta-D-manno-heptose-1,7-bisphosphate.</text>
</comment>
<comment type="function">
    <text evidence="1">Catalyzes the ADP transfer from ATP to D-glycero-beta-D-manno-heptose 1-phosphate, yielding ADP-D-glycero-beta-D-manno-heptose.</text>
</comment>
<comment type="catalytic activity">
    <reaction evidence="1">
        <text>D-glycero-beta-D-manno-heptose 7-phosphate + ATP = D-glycero-beta-D-manno-heptose 1,7-bisphosphate + ADP + H(+)</text>
        <dbReference type="Rhea" id="RHEA:27473"/>
        <dbReference type="ChEBI" id="CHEBI:15378"/>
        <dbReference type="ChEBI" id="CHEBI:30616"/>
        <dbReference type="ChEBI" id="CHEBI:60204"/>
        <dbReference type="ChEBI" id="CHEBI:60208"/>
        <dbReference type="ChEBI" id="CHEBI:456216"/>
        <dbReference type="EC" id="2.7.1.167"/>
    </reaction>
</comment>
<comment type="catalytic activity">
    <reaction evidence="1">
        <text>D-glycero-beta-D-manno-heptose 1-phosphate + ATP + H(+) = ADP-D-glycero-beta-D-manno-heptose + diphosphate</text>
        <dbReference type="Rhea" id="RHEA:27465"/>
        <dbReference type="ChEBI" id="CHEBI:15378"/>
        <dbReference type="ChEBI" id="CHEBI:30616"/>
        <dbReference type="ChEBI" id="CHEBI:33019"/>
        <dbReference type="ChEBI" id="CHEBI:59967"/>
        <dbReference type="ChEBI" id="CHEBI:61593"/>
        <dbReference type="EC" id="2.7.7.70"/>
    </reaction>
</comment>
<comment type="pathway">
    <text evidence="1">Nucleotide-sugar biosynthesis; ADP-L-glycero-beta-D-manno-heptose biosynthesis; ADP-L-glycero-beta-D-manno-heptose from D-glycero-beta-D-manno-heptose 7-phosphate: step 1/4.</text>
</comment>
<comment type="pathway">
    <text evidence="1">Nucleotide-sugar biosynthesis; ADP-L-glycero-beta-D-manno-heptose biosynthesis; ADP-L-glycero-beta-D-manno-heptose from D-glycero-beta-D-manno-heptose 7-phosphate: step 3/4.</text>
</comment>
<comment type="subunit">
    <text evidence="1">Homodimer.</text>
</comment>
<comment type="similarity">
    <text evidence="1">In the N-terminal section; belongs to the carbohydrate kinase PfkB family.</text>
</comment>
<comment type="similarity">
    <text evidence="1">In the C-terminal section; belongs to the cytidylyltransferase family.</text>
</comment>
<feature type="chain" id="PRO_0000323481" description="Bifunctional protein HldE">
    <location>
        <begin position="1"/>
        <end position="486"/>
    </location>
</feature>
<feature type="region of interest" description="Ribokinase">
    <location>
        <begin position="1"/>
        <end position="331"/>
    </location>
</feature>
<feature type="region of interest" description="Cytidylyltransferase">
    <location>
        <begin position="357"/>
        <end position="486"/>
    </location>
</feature>
<feature type="active site" evidence="1">
    <location>
        <position position="277"/>
    </location>
</feature>
<feature type="binding site" evidence="1">
    <location>
        <begin position="208"/>
        <end position="211"/>
    </location>
    <ligand>
        <name>ATP</name>
        <dbReference type="ChEBI" id="CHEBI:30616"/>
    </ligand>
</feature>
<sequence>MAEHDDGDLIAAIRGLARANVLVVGDLMLDRYAYGRVERISPEAPVPILTVTREIAMPGGAGNVVRNLTALDAAAAFVSVVGDDQEGSDLTALIGGQPNVEPWLLVETGRATTVKTRYIAAGQHLIRADRELVMPLTDKLGERLLKIASDAMAATSVTVLSDYRKGVLAPTIARNLIASARSIGRTVIVDPKGADWSHYAEADVITPNRRELAEAVGRDLPDEAAIVGAAREVIGRFGFGAVLCTRSEDGMSLVTVDTVRHYPAEAAEVYDVSGAGDTVVAVLAAGLASGLPLEIAARLSNIAGGLVVGKVGTAVARPDDLVDAVKPASGALRKVVTRQAAAEAAERWRQRGWRIGFTNGCFDLLHPGHVHLLEQARAGCDRLVVGLNADSSVRRLKGATRPVQPEAARAAVLASLASVDLVVIFEEDTPLDLLSAIRPDVLVKGADYTHDTVVGAREVESWGGRVMLAELLPGHSTTATVTRLRS</sequence>
<name>HLDE_ACICJ</name>
<gene>
    <name evidence="1" type="primary">hldE</name>
    <name type="ordered locus">Acry_0354</name>
</gene>
<keyword id="KW-0067">ATP-binding</keyword>
<keyword id="KW-0119">Carbohydrate metabolism</keyword>
<keyword id="KW-0418">Kinase</keyword>
<keyword id="KW-0511">Multifunctional enzyme</keyword>
<keyword id="KW-0547">Nucleotide-binding</keyword>
<keyword id="KW-0548">Nucleotidyltransferase</keyword>
<keyword id="KW-1185">Reference proteome</keyword>
<keyword id="KW-0808">Transferase</keyword>
<organism>
    <name type="scientific">Acidiphilium cryptum (strain JF-5)</name>
    <dbReference type="NCBI Taxonomy" id="349163"/>
    <lineage>
        <taxon>Bacteria</taxon>
        <taxon>Pseudomonadati</taxon>
        <taxon>Pseudomonadota</taxon>
        <taxon>Alphaproteobacteria</taxon>
        <taxon>Acetobacterales</taxon>
        <taxon>Acidocellaceae</taxon>
        <taxon>Acidiphilium</taxon>
    </lineage>
</organism>
<protein>
    <recommendedName>
        <fullName evidence="1">Bifunctional protein HldE</fullName>
    </recommendedName>
    <domain>
        <recommendedName>
            <fullName evidence="1">D-beta-D-heptose 7-phosphate kinase</fullName>
            <ecNumber evidence="1">2.7.1.167</ecNumber>
        </recommendedName>
        <alternativeName>
            <fullName evidence="1">D-beta-D-heptose 7-phosphotransferase</fullName>
        </alternativeName>
        <alternativeName>
            <fullName evidence="1">D-glycero-beta-D-manno-heptose-7-phosphate kinase</fullName>
        </alternativeName>
    </domain>
    <domain>
        <recommendedName>
            <fullName evidence="1">D-beta-D-heptose 1-phosphate adenylyltransferase</fullName>
            <ecNumber evidence="1">2.7.7.70</ecNumber>
        </recommendedName>
        <alternativeName>
            <fullName evidence="1">D-glycero-beta-D-manno-heptose 1-phosphate adenylyltransferase</fullName>
        </alternativeName>
    </domain>
</protein>